<keyword id="KW-0997">Cell inner membrane</keyword>
<keyword id="KW-1003">Cell membrane</keyword>
<keyword id="KW-0963">Cytoplasm</keyword>
<keyword id="KW-0472">Membrane</keyword>
<keyword id="KW-1185">Reference proteome</keyword>
<accession>A1WWW0</accession>
<dbReference type="EMBL" id="CP000544">
    <property type="protein sequence ID" value="ABM62172.1"/>
    <property type="molecule type" value="Genomic_DNA"/>
</dbReference>
<dbReference type="RefSeq" id="WP_011814194.1">
    <property type="nucleotide sequence ID" value="NC_008789.1"/>
</dbReference>
<dbReference type="SMR" id="A1WWW0"/>
<dbReference type="STRING" id="349124.Hhal_1405"/>
<dbReference type="KEGG" id="hha:Hhal_1405"/>
<dbReference type="eggNOG" id="COG2915">
    <property type="taxonomic scope" value="Bacteria"/>
</dbReference>
<dbReference type="HOGENOM" id="CLU_098920_0_0_6"/>
<dbReference type="OrthoDB" id="9788031at2"/>
<dbReference type="Proteomes" id="UP000000647">
    <property type="component" value="Chromosome"/>
</dbReference>
<dbReference type="GO" id="GO:0005737">
    <property type="term" value="C:cytoplasm"/>
    <property type="evidence" value="ECO:0007669"/>
    <property type="project" value="UniProtKB-SubCell"/>
</dbReference>
<dbReference type="GO" id="GO:0005886">
    <property type="term" value="C:plasma membrane"/>
    <property type="evidence" value="ECO:0007669"/>
    <property type="project" value="UniProtKB-SubCell"/>
</dbReference>
<dbReference type="Gene3D" id="1.10.3890.10">
    <property type="entry name" value="HflD-like"/>
    <property type="match status" value="1"/>
</dbReference>
<dbReference type="HAMAP" id="MF_00695">
    <property type="entry name" value="HflD_protein"/>
    <property type="match status" value="1"/>
</dbReference>
<dbReference type="InterPro" id="IPR007451">
    <property type="entry name" value="HflD"/>
</dbReference>
<dbReference type="InterPro" id="IPR035932">
    <property type="entry name" value="HflD-like_sf"/>
</dbReference>
<dbReference type="NCBIfam" id="NF001246">
    <property type="entry name" value="PRK00218.1-2"/>
    <property type="match status" value="1"/>
</dbReference>
<dbReference type="PANTHER" id="PTHR38100">
    <property type="entry name" value="HIGH FREQUENCY LYSOGENIZATION PROTEIN HFLD"/>
    <property type="match status" value="1"/>
</dbReference>
<dbReference type="PANTHER" id="PTHR38100:SF1">
    <property type="entry name" value="HIGH FREQUENCY LYSOGENIZATION PROTEIN HFLD"/>
    <property type="match status" value="1"/>
</dbReference>
<dbReference type="Pfam" id="PF04356">
    <property type="entry name" value="DUF489"/>
    <property type="match status" value="1"/>
</dbReference>
<dbReference type="SUPFAM" id="SSF101322">
    <property type="entry name" value="YcfC-like"/>
    <property type="match status" value="1"/>
</dbReference>
<gene>
    <name evidence="1" type="primary">hflD</name>
    <name type="ordered locus">Hhal_1405</name>
</gene>
<evidence type="ECO:0000255" key="1">
    <source>
        <dbReference type="HAMAP-Rule" id="MF_00695"/>
    </source>
</evidence>
<feature type="chain" id="PRO_0000390639" description="High frequency lysogenization protein HflD homolog">
    <location>
        <begin position="1"/>
        <end position="209"/>
    </location>
</feature>
<organism>
    <name type="scientific">Halorhodospira halophila (strain DSM 244 / SL1)</name>
    <name type="common">Ectothiorhodospira halophila (strain DSM 244 / SL1)</name>
    <dbReference type="NCBI Taxonomy" id="349124"/>
    <lineage>
        <taxon>Bacteria</taxon>
        <taxon>Pseudomonadati</taxon>
        <taxon>Pseudomonadota</taxon>
        <taxon>Gammaproteobacteria</taxon>
        <taxon>Chromatiales</taxon>
        <taxon>Ectothiorhodospiraceae</taxon>
        <taxon>Halorhodospira</taxon>
    </lineage>
</organism>
<sequence>MSESREQEQALTLAVIMQSVQCIREVARTGDTETSRYEPLIEGLLGEYDGSTDALYGAARLAPGLRRVVEQLEDPQEADTTRYVASIFHLERRLMKRQAVLQRIAEGIEQARSQADYFENPAHTSVIRSVGDLYSQTISEMGPRLMIRGEQQHLENERNAALIRALLLCGIRGASLWRDNGGGRMTLLFRRQAIAGAARDLLEALPTEA</sequence>
<protein>
    <recommendedName>
        <fullName evidence="1">High frequency lysogenization protein HflD homolog</fullName>
    </recommendedName>
</protein>
<comment type="subcellular location">
    <subcellularLocation>
        <location>Cytoplasm</location>
    </subcellularLocation>
    <subcellularLocation>
        <location evidence="1">Cell inner membrane</location>
        <topology evidence="1">Peripheral membrane protein</topology>
        <orientation evidence="1">Cytoplasmic side</orientation>
    </subcellularLocation>
</comment>
<comment type="similarity">
    <text evidence="1">Belongs to the HflD family.</text>
</comment>
<name>HFLD_HALHL</name>
<proteinExistence type="inferred from homology"/>
<reference key="1">
    <citation type="submission" date="2006-12" db="EMBL/GenBank/DDBJ databases">
        <title>Complete sequence of Halorhodospira halophila SL1.</title>
        <authorList>
            <consortium name="US DOE Joint Genome Institute"/>
            <person name="Copeland A."/>
            <person name="Lucas S."/>
            <person name="Lapidus A."/>
            <person name="Barry K."/>
            <person name="Detter J.C."/>
            <person name="Glavina del Rio T."/>
            <person name="Hammon N."/>
            <person name="Israni S."/>
            <person name="Dalin E."/>
            <person name="Tice H."/>
            <person name="Pitluck S."/>
            <person name="Saunders E."/>
            <person name="Brettin T."/>
            <person name="Bruce D."/>
            <person name="Han C."/>
            <person name="Tapia R."/>
            <person name="Schmutz J."/>
            <person name="Larimer F."/>
            <person name="Land M."/>
            <person name="Hauser L."/>
            <person name="Kyrpides N."/>
            <person name="Mikhailova N."/>
            <person name="Hoff W."/>
            <person name="Richardson P."/>
        </authorList>
    </citation>
    <scope>NUCLEOTIDE SEQUENCE [LARGE SCALE GENOMIC DNA]</scope>
    <source>
        <strain>DSM 244 / SL1</strain>
    </source>
</reference>